<accession>Q5RC63</accession>
<name>PRDX2_PONAB</name>
<keyword id="KW-0007">Acetylation</keyword>
<keyword id="KW-0049">Antioxidant</keyword>
<keyword id="KW-0963">Cytoplasm</keyword>
<keyword id="KW-1015">Disulfide bond</keyword>
<keyword id="KW-0560">Oxidoreductase</keyword>
<keyword id="KW-0575">Peroxidase</keyword>
<keyword id="KW-0597">Phosphoprotein</keyword>
<keyword id="KW-0676">Redox-active center</keyword>
<keyword id="KW-1185">Reference proteome</keyword>
<evidence type="ECO:0000250" key="1">
    <source>
        <dbReference type="UniProtKB" id="P32119"/>
    </source>
</evidence>
<evidence type="ECO:0000250" key="2">
    <source>
        <dbReference type="UniProtKB" id="Q06830"/>
    </source>
</evidence>
<evidence type="ECO:0000255" key="3">
    <source>
        <dbReference type="PROSITE-ProRule" id="PRU00691"/>
    </source>
</evidence>
<evidence type="ECO:0000305" key="4"/>
<proteinExistence type="evidence at transcript level"/>
<organism>
    <name type="scientific">Pongo abelii</name>
    <name type="common">Sumatran orangutan</name>
    <name type="synonym">Pongo pygmaeus abelii</name>
    <dbReference type="NCBI Taxonomy" id="9601"/>
    <lineage>
        <taxon>Eukaryota</taxon>
        <taxon>Metazoa</taxon>
        <taxon>Chordata</taxon>
        <taxon>Craniata</taxon>
        <taxon>Vertebrata</taxon>
        <taxon>Euteleostomi</taxon>
        <taxon>Mammalia</taxon>
        <taxon>Eutheria</taxon>
        <taxon>Euarchontoglires</taxon>
        <taxon>Primates</taxon>
        <taxon>Haplorrhini</taxon>
        <taxon>Catarrhini</taxon>
        <taxon>Hominidae</taxon>
        <taxon>Pongo</taxon>
    </lineage>
</organism>
<sequence length="177" mass="19430">MASGNARIGKPAPDFKATAVVDGAFKEVKLSDYKGKYVVLFFYPLDFTFVCPTEIIAFSNRAEDFHKLGCEVLGVSVDSQFTHLAWINTPRKEGGLGPLNIPLLADVTRRLSEDYGVLKTDEGIAYRGLFIIDGKGVLRQITVNDLPVGRSVDEALRLVQAFQYTDEHGEGPCFASP</sequence>
<comment type="function">
    <text evidence="1">Thiol-specific peroxidase that catalyzes the reduction of hydrogen peroxide and organic hydroperoxides to water and alcohols, respectively. Plays a role in cell protection against oxidative stress by detoxifying peroxides and as sensor of hydrogen peroxide-mediated signaling events. Might participate in the signaling cascades of growth factors and tumor necrosis factor-alpha by regulating the intracellular concentrations of H(2)O(2).</text>
</comment>
<comment type="catalytic activity">
    <reaction evidence="1">
        <text>a hydroperoxide + [thioredoxin]-dithiol = an alcohol + [thioredoxin]-disulfide + H2O</text>
        <dbReference type="Rhea" id="RHEA:62620"/>
        <dbReference type="Rhea" id="RHEA-COMP:10698"/>
        <dbReference type="Rhea" id="RHEA-COMP:10700"/>
        <dbReference type="ChEBI" id="CHEBI:15377"/>
        <dbReference type="ChEBI" id="CHEBI:29950"/>
        <dbReference type="ChEBI" id="CHEBI:30879"/>
        <dbReference type="ChEBI" id="CHEBI:35924"/>
        <dbReference type="ChEBI" id="CHEBI:50058"/>
        <dbReference type="EC" id="1.11.1.24"/>
    </reaction>
</comment>
<comment type="subunit">
    <text evidence="1">Homodimer; disulfide-linked, upon oxidation. 5 homodimers assemble to form a ring-like decamer. Interacts with TIPIN.</text>
</comment>
<comment type="subcellular location">
    <subcellularLocation>
        <location evidence="1">Cytoplasm</location>
    </subcellularLocation>
</comment>
<comment type="PTM">
    <text evidence="1 2">The enzyme can be inactivated by further oxidation of the cysteine sulfenic acid (C(P)-SOH) to sulphinic acid (C(P)-SO2H) instead of its condensation to a disulfide bond. It can be reactivated by forming a transient disulfide bond with sulfiredoxin SRXN1, which reduces the cysteine sulfinic acid in an ATP- and Mg-dependent manner.</text>
</comment>
<comment type="PTM">
    <text evidence="1">Acetylation increases resistance to transition to high molecular-mass complexes. Deacetylated by HDAC6 which decreases reducing activity.</text>
</comment>
<comment type="miscellaneous">
    <text evidence="1">The active site is a conserved redox-active cysteine residue, the peroxidatic cysteine (C(P)), which makes the nucleophilic attack on the peroxide substrate. The peroxide oxidizes the C(P)-SH to cysteine sulfenic acid (C(P)-SOH), which then reacts with another cysteine residue, the resolving cysteine (C(R)), to form a disulfide bridge. The disulfide is subsequently reduced by an appropriate electron donor to complete the catalytic cycle. In this typical 2-Cys peroxiredoxin, C(R) is provided by the other dimeric subunit to form an intersubunit disulfide. The disulfide is subsequently reduced by thioredoxin.</text>
</comment>
<comment type="similarity">
    <text evidence="4">Belongs to the peroxiredoxin family. AhpC/Prx1 subfamily.</text>
</comment>
<feature type="initiator methionine" description="Removed" evidence="1">
    <location>
        <position position="1"/>
    </location>
</feature>
<feature type="chain" id="PRO_0000256857" description="Peroxiredoxin-2">
    <location>
        <begin position="2"/>
        <end position="177"/>
    </location>
</feature>
<feature type="domain" description="Thioredoxin" evidence="3">
    <location>
        <begin position="6"/>
        <end position="164"/>
    </location>
</feature>
<feature type="active site" description="Cysteine sulfenic acid (-SOH) intermediate" evidence="1">
    <location>
        <position position="51"/>
    </location>
</feature>
<feature type="modified residue" description="N-acetylalanine" evidence="1">
    <location>
        <position position="2"/>
    </location>
</feature>
<feature type="modified residue" description="Phosphoserine" evidence="1">
    <location>
        <position position="112"/>
    </location>
</feature>
<feature type="disulfide bond" description="Interchain (with C-173); in linked form" evidence="1">
    <location>
        <position position="51"/>
    </location>
</feature>
<feature type="disulfide bond" description="Interchain (with C-51); in linked form" evidence="1">
    <location>
        <position position="173"/>
    </location>
</feature>
<dbReference type="EC" id="1.11.1.24" evidence="1"/>
<dbReference type="EMBL" id="CR858417">
    <property type="protein sequence ID" value="CAH90647.1"/>
    <property type="molecule type" value="mRNA"/>
</dbReference>
<dbReference type="RefSeq" id="NP_001125349.1">
    <property type="nucleotide sequence ID" value="NM_001131877.2"/>
</dbReference>
<dbReference type="SMR" id="Q5RC63"/>
<dbReference type="FunCoup" id="Q5RC63">
    <property type="interactions" value="1380"/>
</dbReference>
<dbReference type="STRING" id="9601.ENSPPYP00000024125"/>
<dbReference type="PeroxiBase" id="4552">
    <property type="entry name" value="Ppy2CysPrx02"/>
</dbReference>
<dbReference type="Ensembl" id="ENSPPYT00000011193.2">
    <property type="protein sequence ID" value="ENSPPYP00000010771.1"/>
    <property type="gene ID" value="ENSPPYG00000009607.3"/>
</dbReference>
<dbReference type="GeneID" id="100172251"/>
<dbReference type="KEGG" id="pon:100172251"/>
<dbReference type="CTD" id="7001"/>
<dbReference type="eggNOG" id="KOG0852">
    <property type="taxonomic scope" value="Eukaryota"/>
</dbReference>
<dbReference type="GeneTree" id="ENSGT00940000155828"/>
<dbReference type="InParanoid" id="Q5RC63"/>
<dbReference type="OMA" id="VCTKELC"/>
<dbReference type="OrthoDB" id="185659at2759"/>
<dbReference type="Proteomes" id="UP000001595">
    <property type="component" value="Chromosome 19"/>
</dbReference>
<dbReference type="GO" id="GO:0005829">
    <property type="term" value="C:cytosol"/>
    <property type="evidence" value="ECO:0007669"/>
    <property type="project" value="TreeGrafter"/>
</dbReference>
<dbReference type="GO" id="GO:0008379">
    <property type="term" value="F:thioredoxin peroxidase activity"/>
    <property type="evidence" value="ECO:0007669"/>
    <property type="project" value="Ensembl"/>
</dbReference>
<dbReference type="GO" id="GO:0045454">
    <property type="term" value="P:cell redox homeostasis"/>
    <property type="evidence" value="ECO:0007669"/>
    <property type="project" value="TreeGrafter"/>
</dbReference>
<dbReference type="GO" id="GO:0002357">
    <property type="term" value="P:defense response to tumor cell"/>
    <property type="evidence" value="ECO:0007669"/>
    <property type="project" value="Ensembl"/>
</dbReference>
<dbReference type="GO" id="GO:0042744">
    <property type="term" value="P:hydrogen peroxide catabolic process"/>
    <property type="evidence" value="ECO:0007669"/>
    <property type="project" value="TreeGrafter"/>
</dbReference>
<dbReference type="GO" id="GO:0045321">
    <property type="term" value="P:leukocyte activation"/>
    <property type="evidence" value="ECO:0007669"/>
    <property type="project" value="TreeGrafter"/>
</dbReference>
<dbReference type="GO" id="GO:0042981">
    <property type="term" value="P:regulation of apoptotic process"/>
    <property type="evidence" value="ECO:0007669"/>
    <property type="project" value="Ensembl"/>
</dbReference>
<dbReference type="GO" id="GO:0019430">
    <property type="term" value="P:removal of superoxide radicals"/>
    <property type="evidence" value="ECO:0007669"/>
    <property type="project" value="Ensembl"/>
</dbReference>
<dbReference type="CDD" id="cd03015">
    <property type="entry name" value="PRX_Typ2cys"/>
    <property type="match status" value="1"/>
</dbReference>
<dbReference type="FunFam" id="3.40.30.10:FF:000003">
    <property type="entry name" value="Peroxiredoxin 1"/>
    <property type="match status" value="1"/>
</dbReference>
<dbReference type="Gene3D" id="3.40.30.10">
    <property type="entry name" value="Glutaredoxin"/>
    <property type="match status" value="1"/>
</dbReference>
<dbReference type="InterPro" id="IPR000866">
    <property type="entry name" value="AhpC/TSA"/>
</dbReference>
<dbReference type="InterPro" id="IPR050217">
    <property type="entry name" value="Peroxiredoxin"/>
</dbReference>
<dbReference type="InterPro" id="IPR024706">
    <property type="entry name" value="Peroxiredoxin_AhpC-typ"/>
</dbReference>
<dbReference type="InterPro" id="IPR036249">
    <property type="entry name" value="Thioredoxin-like_sf"/>
</dbReference>
<dbReference type="InterPro" id="IPR013766">
    <property type="entry name" value="Thioredoxin_domain"/>
</dbReference>
<dbReference type="PANTHER" id="PTHR10681:SF161">
    <property type="entry name" value="PEROXIREDOXIN-2"/>
    <property type="match status" value="1"/>
</dbReference>
<dbReference type="PANTHER" id="PTHR10681">
    <property type="entry name" value="THIOREDOXIN PEROXIDASE"/>
    <property type="match status" value="1"/>
</dbReference>
<dbReference type="Pfam" id="PF00578">
    <property type="entry name" value="AhpC-TSA"/>
    <property type="match status" value="1"/>
</dbReference>
<dbReference type="PIRSF" id="PIRSF000239">
    <property type="entry name" value="AHPC"/>
    <property type="match status" value="1"/>
</dbReference>
<dbReference type="SUPFAM" id="SSF52833">
    <property type="entry name" value="Thioredoxin-like"/>
    <property type="match status" value="1"/>
</dbReference>
<dbReference type="PROSITE" id="PS51352">
    <property type="entry name" value="THIOREDOXIN_2"/>
    <property type="match status" value="1"/>
</dbReference>
<reference key="1">
    <citation type="submission" date="2004-11" db="EMBL/GenBank/DDBJ databases">
        <authorList>
            <consortium name="The German cDNA consortium"/>
        </authorList>
    </citation>
    <scope>NUCLEOTIDE SEQUENCE [LARGE SCALE MRNA]</scope>
    <source>
        <tissue>Heart</tissue>
    </source>
</reference>
<gene>
    <name type="primary">PRDX2</name>
</gene>
<protein>
    <recommendedName>
        <fullName>Peroxiredoxin-2</fullName>
        <ecNumber evidence="1">1.11.1.24</ecNumber>
    </recommendedName>
    <alternativeName>
        <fullName evidence="4">Thioredoxin-dependent peroxiredoxin 2</fullName>
    </alternativeName>
</protein>